<reference key="1">
    <citation type="journal article" date="2011" name="J. Bacteriol.">
        <title>Genome sequence of lineage III Listeria monocytogenes strain HCC23.</title>
        <authorList>
            <person name="Steele C.L."/>
            <person name="Donaldson J.R."/>
            <person name="Paul D."/>
            <person name="Banes M.M."/>
            <person name="Arick T."/>
            <person name="Bridges S.M."/>
            <person name="Lawrence M.L."/>
        </authorList>
    </citation>
    <scope>NUCLEOTIDE SEQUENCE [LARGE SCALE GENOMIC DNA]</scope>
    <source>
        <strain>HCC23</strain>
    </source>
</reference>
<feature type="chain" id="PRO_1000135608" description="Small ribosomal subunit protein uS7">
    <location>
        <begin position="1"/>
        <end position="156"/>
    </location>
</feature>
<organism>
    <name type="scientific">Listeria monocytogenes serotype 4a (strain HCC23)</name>
    <dbReference type="NCBI Taxonomy" id="552536"/>
    <lineage>
        <taxon>Bacteria</taxon>
        <taxon>Bacillati</taxon>
        <taxon>Bacillota</taxon>
        <taxon>Bacilli</taxon>
        <taxon>Bacillales</taxon>
        <taxon>Listeriaceae</taxon>
        <taxon>Listeria</taxon>
    </lineage>
</organism>
<proteinExistence type="inferred from homology"/>
<protein>
    <recommendedName>
        <fullName evidence="1">Small ribosomal subunit protein uS7</fullName>
    </recommendedName>
    <alternativeName>
        <fullName evidence="2">30S ribosomal protein S7</fullName>
    </alternativeName>
</protein>
<dbReference type="EMBL" id="CP001175">
    <property type="protein sequence ID" value="ACK41210.1"/>
    <property type="molecule type" value="Genomic_DNA"/>
</dbReference>
<dbReference type="RefSeq" id="WP_003722012.1">
    <property type="nucleotide sequence ID" value="NC_011660.1"/>
</dbReference>
<dbReference type="SMR" id="B8DAY5"/>
<dbReference type="GeneID" id="93236077"/>
<dbReference type="KEGG" id="lmh:LMHCC_2879"/>
<dbReference type="HOGENOM" id="CLU_072226_1_1_9"/>
<dbReference type="GO" id="GO:0015935">
    <property type="term" value="C:small ribosomal subunit"/>
    <property type="evidence" value="ECO:0007669"/>
    <property type="project" value="InterPro"/>
</dbReference>
<dbReference type="GO" id="GO:0019843">
    <property type="term" value="F:rRNA binding"/>
    <property type="evidence" value="ECO:0007669"/>
    <property type="project" value="UniProtKB-UniRule"/>
</dbReference>
<dbReference type="GO" id="GO:0003735">
    <property type="term" value="F:structural constituent of ribosome"/>
    <property type="evidence" value="ECO:0007669"/>
    <property type="project" value="InterPro"/>
</dbReference>
<dbReference type="GO" id="GO:0000049">
    <property type="term" value="F:tRNA binding"/>
    <property type="evidence" value="ECO:0007669"/>
    <property type="project" value="UniProtKB-UniRule"/>
</dbReference>
<dbReference type="GO" id="GO:0006412">
    <property type="term" value="P:translation"/>
    <property type="evidence" value="ECO:0007669"/>
    <property type="project" value="UniProtKB-UniRule"/>
</dbReference>
<dbReference type="CDD" id="cd14869">
    <property type="entry name" value="uS7_Bacteria"/>
    <property type="match status" value="1"/>
</dbReference>
<dbReference type="FunFam" id="1.10.455.10:FF:000001">
    <property type="entry name" value="30S ribosomal protein S7"/>
    <property type="match status" value="1"/>
</dbReference>
<dbReference type="Gene3D" id="1.10.455.10">
    <property type="entry name" value="Ribosomal protein S7 domain"/>
    <property type="match status" value="1"/>
</dbReference>
<dbReference type="HAMAP" id="MF_00480_B">
    <property type="entry name" value="Ribosomal_uS7_B"/>
    <property type="match status" value="1"/>
</dbReference>
<dbReference type="InterPro" id="IPR000235">
    <property type="entry name" value="Ribosomal_uS7"/>
</dbReference>
<dbReference type="InterPro" id="IPR005717">
    <property type="entry name" value="Ribosomal_uS7_bac/org-type"/>
</dbReference>
<dbReference type="InterPro" id="IPR020606">
    <property type="entry name" value="Ribosomal_uS7_CS"/>
</dbReference>
<dbReference type="InterPro" id="IPR023798">
    <property type="entry name" value="Ribosomal_uS7_dom"/>
</dbReference>
<dbReference type="InterPro" id="IPR036823">
    <property type="entry name" value="Ribosomal_uS7_dom_sf"/>
</dbReference>
<dbReference type="NCBIfam" id="TIGR01029">
    <property type="entry name" value="rpsG_bact"/>
    <property type="match status" value="1"/>
</dbReference>
<dbReference type="PANTHER" id="PTHR11205">
    <property type="entry name" value="RIBOSOMAL PROTEIN S7"/>
    <property type="match status" value="1"/>
</dbReference>
<dbReference type="Pfam" id="PF00177">
    <property type="entry name" value="Ribosomal_S7"/>
    <property type="match status" value="1"/>
</dbReference>
<dbReference type="PIRSF" id="PIRSF002122">
    <property type="entry name" value="RPS7p_RPS7a_RPS5e_RPS7o"/>
    <property type="match status" value="1"/>
</dbReference>
<dbReference type="SUPFAM" id="SSF47973">
    <property type="entry name" value="Ribosomal protein S7"/>
    <property type="match status" value="1"/>
</dbReference>
<dbReference type="PROSITE" id="PS00052">
    <property type="entry name" value="RIBOSOMAL_S7"/>
    <property type="match status" value="1"/>
</dbReference>
<evidence type="ECO:0000255" key="1">
    <source>
        <dbReference type="HAMAP-Rule" id="MF_00480"/>
    </source>
</evidence>
<evidence type="ECO:0000305" key="2"/>
<gene>
    <name evidence="1" type="primary">rpsG</name>
    <name type="ordered locus">LMHCC_2879</name>
</gene>
<accession>B8DAY5</accession>
<keyword id="KW-0687">Ribonucleoprotein</keyword>
<keyword id="KW-0689">Ribosomal protein</keyword>
<keyword id="KW-0694">RNA-binding</keyword>
<keyword id="KW-0699">rRNA-binding</keyword>
<keyword id="KW-0820">tRNA-binding</keyword>
<name>RS7_LISMH</name>
<comment type="function">
    <text evidence="1">One of the primary rRNA binding proteins, it binds directly to 16S rRNA where it nucleates assembly of the head domain of the 30S subunit. Is located at the subunit interface close to the decoding center, probably blocks exit of the E-site tRNA.</text>
</comment>
<comment type="subunit">
    <text evidence="1">Part of the 30S ribosomal subunit. Contacts proteins S9 and S11.</text>
</comment>
<comment type="similarity">
    <text evidence="1">Belongs to the universal ribosomal protein uS7 family.</text>
</comment>
<sequence length="156" mass="17817">MPRKGPVAKRDVLPDPIYNSKLVTRLINKMMVDGKRGKSQAILYSAFDIIAQETGKDPMEVFEQAMKNIMPLLEVKARRVGGANYQVPIEVRADRRSTLGLRWLVNYARLRGEKTMEVRVAREIMDAANNTGASVKKREDTHKMADANRAFAHYRW</sequence>